<evidence type="ECO:0000255" key="1">
    <source>
        <dbReference type="HAMAP-Rule" id="MF_01320"/>
    </source>
</evidence>
<evidence type="ECO:0000256" key="2">
    <source>
        <dbReference type="SAM" id="MobiDB-lite"/>
    </source>
</evidence>
<evidence type="ECO:0000305" key="3"/>
<gene>
    <name evidence="1" type="primary">rplB</name>
    <name type="ordered locus">Pmen_3906</name>
</gene>
<feature type="chain" id="PRO_1000051942" description="Large ribosomal subunit protein uL2">
    <location>
        <begin position="1"/>
        <end position="274"/>
    </location>
</feature>
<feature type="region of interest" description="Disordered" evidence="2">
    <location>
        <begin position="34"/>
        <end position="54"/>
    </location>
</feature>
<feature type="region of interest" description="Disordered" evidence="2">
    <location>
        <begin position="224"/>
        <end position="261"/>
    </location>
</feature>
<comment type="function">
    <text evidence="1">One of the primary rRNA binding proteins. Required for association of the 30S and 50S subunits to form the 70S ribosome, for tRNA binding and peptide bond formation. It has been suggested to have peptidyltransferase activity; this is somewhat controversial. Makes several contacts with the 16S rRNA in the 70S ribosome.</text>
</comment>
<comment type="subunit">
    <text evidence="1">Part of the 50S ribosomal subunit. Forms a bridge to the 30S subunit in the 70S ribosome.</text>
</comment>
<comment type="similarity">
    <text evidence="1">Belongs to the universal ribosomal protein uL2 family.</text>
</comment>
<organism>
    <name type="scientific">Ectopseudomonas mendocina (strain ymp)</name>
    <name type="common">Pseudomonas mendocina</name>
    <dbReference type="NCBI Taxonomy" id="399739"/>
    <lineage>
        <taxon>Bacteria</taxon>
        <taxon>Pseudomonadati</taxon>
        <taxon>Pseudomonadota</taxon>
        <taxon>Gammaproteobacteria</taxon>
        <taxon>Pseudomonadales</taxon>
        <taxon>Pseudomonadaceae</taxon>
        <taxon>Ectopseudomonas</taxon>
    </lineage>
</organism>
<reference key="1">
    <citation type="submission" date="2007-04" db="EMBL/GenBank/DDBJ databases">
        <title>Complete sequence of Pseudomonas mendocina ymp.</title>
        <authorList>
            <consortium name="US DOE Joint Genome Institute"/>
            <person name="Copeland A."/>
            <person name="Lucas S."/>
            <person name="Lapidus A."/>
            <person name="Barry K."/>
            <person name="Glavina del Rio T."/>
            <person name="Dalin E."/>
            <person name="Tice H."/>
            <person name="Pitluck S."/>
            <person name="Kiss H."/>
            <person name="Brettin T."/>
            <person name="Detter J.C."/>
            <person name="Bruce D."/>
            <person name="Han C."/>
            <person name="Schmutz J."/>
            <person name="Larimer F."/>
            <person name="Land M."/>
            <person name="Hauser L."/>
            <person name="Kyrpides N."/>
            <person name="Mikhailova N."/>
            <person name="Hersman L."/>
            <person name="Dubois J."/>
            <person name="Maurice P."/>
            <person name="Richardson P."/>
        </authorList>
    </citation>
    <scope>NUCLEOTIDE SEQUENCE [LARGE SCALE GENOMIC DNA]</scope>
    <source>
        <strain>ymp</strain>
    </source>
</reference>
<proteinExistence type="inferred from homology"/>
<name>RL2_ECTM1</name>
<dbReference type="EMBL" id="CP000680">
    <property type="protein sequence ID" value="ABP86653.1"/>
    <property type="molecule type" value="Genomic_DNA"/>
</dbReference>
<dbReference type="SMR" id="A4XZ87"/>
<dbReference type="STRING" id="399739.Pmen_3906"/>
<dbReference type="KEGG" id="pmy:Pmen_3906"/>
<dbReference type="eggNOG" id="COG0090">
    <property type="taxonomic scope" value="Bacteria"/>
</dbReference>
<dbReference type="HOGENOM" id="CLU_036235_2_1_6"/>
<dbReference type="OrthoDB" id="9778722at2"/>
<dbReference type="GO" id="GO:0015934">
    <property type="term" value="C:large ribosomal subunit"/>
    <property type="evidence" value="ECO:0007669"/>
    <property type="project" value="InterPro"/>
</dbReference>
<dbReference type="GO" id="GO:0019843">
    <property type="term" value="F:rRNA binding"/>
    <property type="evidence" value="ECO:0007669"/>
    <property type="project" value="UniProtKB-UniRule"/>
</dbReference>
<dbReference type="GO" id="GO:0003735">
    <property type="term" value="F:structural constituent of ribosome"/>
    <property type="evidence" value="ECO:0007669"/>
    <property type="project" value="InterPro"/>
</dbReference>
<dbReference type="GO" id="GO:0016740">
    <property type="term" value="F:transferase activity"/>
    <property type="evidence" value="ECO:0007669"/>
    <property type="project" value="InterPro"/>
</dbReference>
<dbReference type="GO" id="GO:0002181">
    <property type="term" value="P:cytoplasmic translation"/>
    <property type="evidence" value="ECO:0007669"/>
    <property type="project" value="TreeGrafter"/>
</dbReference>
<dbReference type="FunFam" id="2.30.30.30:FF:000001">
    <property type="entry name" value="50S ribosomal protein L2"/>
    <property type="match status" value="1"/>
</dbReference>
<dbReference type="FunFam" id="2.40.50.140:FF:000003">
    <property type="entry name" value="50S ribosomal protein L2"/>
    <property type="match status" value="1"/>
</dbReference>
<dbReference type="FunFam" id="4.10.950.10:FF:000001">
    <property type="entry name" value="50S ribosomal protein L2"/>
    <property type="match status" value="1"/>
</dbReference>
<dbReference type="Gene3D" id="2.30.30.30">
    <property type="match status" value="1"/>
</dbReference>
<dbReference type="Gene3D" id="2.40.50.140">
    <property type="entry name" value="Nucleic acid-binding proteins"/>
    <property type="match status" value="1"/>
</dbReference>
<dbReference type="Gene3D" id="4.10.950.10">
    <property type="entry name" value="Ribosomal protein L2, domain 3"/>
    <property type="match status" value="1"/>
</dbReference>
<dbReference type="HAMAP" id="MF_01320_B">
    <property type="entry name" value="Ribosomal_uL2_B"/>
    <property type="match status" value="1"/>
</dbReference>
<dbReference type="InterPro" id="IPR012340">
    <property type="entry name" value="NA-bd_OB-fold"/>
</dbReference>
<dbReference type="InterPro" id="IPR014722">
    <property type="entry name" value="Rib_uL2_dom2"/>
</dbReference>
<dbReference type="InterPro" id="IPR002171">
    <property type="entry name" value="Ribosomal_uL2"/>
</dbReference>
<dbReference type="InterPro" id="IPR005880">
    <property type="entry name" value="Ribosomal_uL2_bac/org-type"/>
</dbReference>
<dbReference type="InterPro" id="IPR022669">
    <property type="entry name" value="Ribosomal_uL2_C"/>
</dbReference>
<dbReference type="InterPro" id="IPR022671">
    <property type="entry name" value="Ribosomal_uL2_CS"/>
</dbReference>
<dbReference type="InterPro" id="IPR014726">
    <property type="entry name" value="Ribosomal_uL2_dom3"/>
</dbReference>
<dbReference type="InterPro" id="IPR022666">
    <property type="entry name" value="Ribosomal_uL2_RNA-bd_dom"/>
</dbReference>
<dbReference type="InterPro" id="IPR008991">
    <property type="entry name" value="Translation_prot_SH3-like_sf"/>
</dbReference>
<dbReference type="NCBIfam" id="TIGR01171">
    <property type="entry name" value="rplB_bact"/>
    <property type="match status" value="1"/>
</dbReference>
<dbReference type="PANTHER" id="PTHR13691:SF5">
    <property type="entry name" value="LARGE RIBOSOMAL SUBUNIT PROTEIN UL2M"/>
    <property type="match status" value="1"/>
</dbReference>
<dbReference type="PANTHER" id="PTHR13691">
    <property type="entry name" value="RIBOSOMAL PROTEIN L2"/>
    <property type="match status" value="1"/>
</dbReference>
<dbReference type="Pfam" id="PF00181">
    <property type="entry name" value="Ribosomal_L2"/>
    <property type="match status" value="1"/>
</dbReference>
<dbReference type="Pfam" id="PF03947">
    <property type="entry name" value="Ribosomal_L2_C"/>
    <property type="match status" value="1"/>
</dbReference>
<dbReference type="PIRSF" id="PIRSF002158">
    <property type="entry name" value="Ribosomal_L2"/>
    <property type="match status" value="1"/>
</dbReference>
<dbReference type="SMART" id="SM01383">
    <property type="entry name" value="Ribosomal_L2"/>
    <property type="match status" value="1"/>
</dbReference>
<dbReference type="SMART" id="SM01382">
    <property type="entry name" value="Ribosomal_L2_C"/>
    <property type="match status" value="1"/>
</dbReference>
<dbReference type="SUPFAM" id="SSF50249">
    <property type="entry name" value="Nucleic acid-binding proteins"/>
    <property type="match status" value="1"/>
</dbReference>
<dbReference type="SUPFAM" id="SSF50104">
    <property type="entry name" value="Translation proteins SH3-like domain"/>
    <property type="match status" value="1"/>
</dbReference>
<dbReference type="PROSITE" id="PS00467">
    <property type="entry name" value="RIBOSOMAL_L2"/>
    <property type="match status" value="1"/>
</dbReference>
<sequence>MAIVKCKPTSAGRRFVVKVVNQELHKGAPYAPLLEKKSKSGGRNNNGRITTRHIGGGHKQHYRLVDFRRNDKDGIPATVERVEYDPNRTAHIALLKYADGERRYIIAPKGVVAGDQLVAGNMAPIKPGNSLQLRNIPVGSTVHGIELKPGKGAQIARSAGASAQLIAREGAYVTLRLRSGEMRKVLAECRATLGEVSNSEHSLRSLGKAGAKRWRGVRPTVRGVAMNPVDHPHGGGEGRTSGGRHPVSPWGFPTKGAKTRANKRTDNMIVRRRK</sequence>
<keyword id="KW-0687">Ribonucleoprotein</keyword>
<keyword id="KW-0689">Ribosomal protein</keyword>
<keyword id="KW-0694">RNA-binding</keyword>
<keyword id="KW-0699">rRNA-binding</keyword>
<protein>
    <recommendedName>
        <fullName evidence="1">Large ribosomal subunit protein uL2</fullName>
    </recommendedName>
    <alternativeName>
        <fullName evidence="3">50S ribosomal protein L2</fullName>
    </alternativeName>
</protein>
<accession>A4XZ87</accession>